<organism>
    <name type="scientific">Mycoplasma capricolum subsp. capricolum (strain California kid / ATCC 27343 / NCTC 10154)</name>
    <dbReference type="NCBI Taxonomy" id="340047"/>
    <lineage>
        <taxon>Bacteria</taxon>
        <taxon>Bacillati</taxon>
        <taxon>Mycoplasmatota</taxon>
        <taxon>Mollicutes</taxon>
        <taxon>Mycoplasmataceae</taxon>
        <taxon>Mycoplasma</taxon>
    </lineage>
</organism>
<gene>
    <name evidence="1" type="primary">folD</name>
    <name type="ordered locus">MCAP_0706</name>
</gene>
<sequence>MVILDGKLVSKTRKQLVKQQIDIYLNKGYRKPKLAVILIGNDQASELYVSNKIKACNLVGIESMLLRFDENINSQTLSDQINQLNNDQLVDAILLQLPLPKHLNEQMFLQAITPLKDVDGFHYINQGKMLEGYDTIYPCTPIGIINLLKAYNVDVKSKDITIIGTSNIVGKPLAIMLSNMGATVSMCNKNTKSLKKYTKISDIVISATGKQFIITKDMIKKNAIVIDVGIIRDPITNKIVGDVDFENVKELCSYITPVPGGVGPMTVAMLLENTLQLYKKHIKE</sequence>
<reference key="1">
    <citation type="submission" date="2005-09" db="EMBL/GenBank/DDBJ databases">
        <authorList>
            <person name="Glass J.I."/>
            <person name="Lartigue C."/>
            <person name="Pfannkoch C."/>
            <person name="Baden-Tillson H."/>
            <person name="Smith H.O."/>
            <person name="Venter J.C."/>
            <person name="Roske K."/>
            <person name="Wise K.S."/>
            <person name="Calcutt M.J."/>
            <person name="Nelson W.C."/>
            <person name="Nierman W.C."/>
        </authorList>
    </citation>
    <scope>NUCLEOTIDE SEQUENCE [LARGE SCALE GENOMIC DNA]</scope>
    <source>
        <strain>California kid / ATCC 27343 / NCTC 10154</strain>
    </source>
</reference>
<name>FOLD_MYCCT</name>
<keyword id="KW-0028">Amino-acid biosynthesis</keyword>
<keyword id="KW-0368">Histidine biosynthesis</keyword>
<keyword id="KW-0378">Hydrolase</keyword>
<keyword id="KW-0486">Methionine biosynthesis</keyword>
<keyword id="KW-0511">Multifunctional enzyme</keyword>
<keyword id="KW-0521">NADP</keyword>
<keyword id="KW-0554">One-carbon metabolism</keyword>
<keyword id="KW-0560">Oxidoreductase</keyword>
<keyword id="KW-0658">Purine biosynthesis</keyword>
<protein>
    <recommendedName>
        <fullName evidence="1">Bifunctional protein FolD</fullName>
    </recommendedName>
    <domain>
        <recommendedName>
            <fullName evidence="1">Methylenetetrahydrofolate dehydrogenase</fullName>
            <ecNumber evidence="1">1.5.1.5</ecNumber>
        </recommendedName>
    </domain>
    <domain>
        <recommendedName>
            <fullName evidence="1">Methenyltetrahydrofolate cyclohydrolase</fullName>
            <ecNumber evidence="1">3.5.4.9</ecNumber>
        </recommendedName>
    </domain>
</protein>
<dbReference type="EC" id="1.5.1.5" evidence="1"/>
<dbReference type="EC" id="3.5.4.9" evidence="1"/>
<dbReference type="EMBL" id="CP000123">
    <property type="protein sequence ID" value="ABC01177.1"/>
    <property type="molecule type" value="Genomic_DNA"/>
</dbReference>
<dbReference type="RefSeq" id="WP_011387550.1">
    <property type="nucleotide sequence ID" value="NC_007633.1"/>
</dbReference>
<dbReference type="SMR" id="Q2SRE7"/>
<dbReference type="GeneID" id="23778340"/>
<dbReference type="KEGG" id="mcp:MCAP_0706"/>
<dbReference type="HOGENOM" id="CLU_034045_2_1_14"/>
<dbReference type="PhylomeDB" id="Q2SRE7"/>
<dbReference type="UniPathway" id="UPA00193"/>
<dbReference type="Proteomes" id="UP000001928">
    <property type="component" value="Chromosome"/>
</dbReference>
<dbReference type="GO" id="GO:0005829">
    <property type="term" value="C:cytosol"/>
    <property type="evidence" value="ECO:0007669"/>
    <property type="project" value="TreeGrafter"/>
</dbReference>
<dbReference type="GO" id="GO:0004477">
    <property type="term" value="F:methenyltetrahydrofolate cyclohydrolase activity"/>
    <property type="evidence" value="ECO:0007669"/>
    <property type="project" value="UniProtKB-UniRule"/>
</dbReference>
<dbReference type="GO" id="GO:0004488">
    <property type="term" value="F:methylenetetrahydrofolate dehydrogenase (NADP+) activity"/>
    <property type="evidence" value="ECO:0007669"/>
    <property type="project" value="UniProtKB-UniRule"/>
</dbReference>
<dbReference type="GO" id="GO:0000105">
    <property type="term" value="P:L-histidine biosynthetic process"/>
    <property type="evidence" value="ECO:0007669"/>
    <property type="project" value="UniProtKB-KW"/>
</dbReference>
<dbReference type="GO" id="GO:0009086">
    <property type="term" value="P:methionine biosynthetic process"/>
    <property type="evidence" value="ECO:0007669"/>
    <property type="project" value="UniProtKB-KW"/>
</dbReference>
<dbReference type="GO" id="GO:0006164">
    <property type="term" value="P:purine nucleotide biosynthetic process"/>
    <property type="evidence" value="ECO:0007669"/>
    <property type="project" value="UniProtKB-KW"/>
</dbReference>
<dbReference type="GO" id="GO:0035999">
    <property type="term" value="P:tetrahydrofolate interconversion"/>
    <property type="evidence" value="ECO:0007669"/>
    <property type="project" value="UniProtKB-UniRule"/>
</dbReference>
<dbReference type="CDD" id="cd01080">
    <property type="entry name" value="NAD_bind_m-THF_DH_Cyclohyd"/>
    <property type="match status" value="1"/>
</dbReference>
<dbReference type="FunFam" id="3.40.50.720:FF:000094">
    <property type="entry name" value="Bifunctional protein FolD"/>
    <property type="match status" value="1"/>
</dbReference>
<dbReference type="FunFam" id="3.40.50.10860:FF:000005">
    <property type="entry name" value="C-1-tetrahydrofolate synthase, cytoplasmic, putative"/>
    <property type="match status" value="1"/>
</dbReference>
<dbReference type="Gene3D" id="3.40.50.10860">
    <property type="entry name" value="Leucine Dehydrogenase, chain A, domain 1"/>
    <property type="match status" value="1"/>
</dbReference>
<dbReference type="Gene3D" id="3.40.50.720">
    <property type="entry name" value="NAD(P)-binding Rossmann-like Domain"/>
    <property type="match status" value="1"/>
</dbReference>
<dbReference type="HAMAP" id="MF_01576">
    <property type="entry name" value="THF_DHG_CYH"/>
    <property type="match status" value="1"/>
</dbReference>
<dbReference type="InterPro" id="IPR046346">
    <property type="entry name" value="Aminoacid_DH-like_N_sf"/>
</dbReference>
<dbReference type="InterPro" id="IPR036291">
    <property type="entry name" value="NAD(P)-bd_dom_sf"/>
</dbReference>
<dbReference type="InterPro" id="IPR000672">
    <property type="entry name" value="THF_DH/CycHdrlase"/>
</dbReference>
<dbReference type="InterPro" id="IPR020630">
    <property type="entry name" value="THF_DH/CycHdrlase_cat_dom"/>
</dbReference>
<dbReference type="InterPro" id="IPR020867">
    <property type="entry name" value="THF_DH/CycHdrlase_CS"/>
</dbReference>
<dbReference type="InterPro" id="IPR020631">
    <property type="entry name" value="THF_DH/CycHdrlase_NAD-bd_dom"/>
</dbReference>
<dbReference type="PANTHER" id="PTHR48099:SF5">
    <property type="entry name" value="C-1-TETRAHYDROFOLATE SYNTHASE, CYTOPLASMIC"/>
    <property type="match status" value="1"/>
</dbReference>
<dbReference type="PANTHER" id="PTHR48099">
    <property type="entry name" value="C-1-TETRAHYDROFOLATE SYNTHASE, CYTOPLASMIC-RELATED"/>
    <property type="match status" value="1"/>
</dbReference>
<dbReference type="Pfam" id="PF00763">
    <property type="entry name" value="THF_DHG_CYH"/>
    <property type="match status" value="1"/>
</dbReference>
<dbReference type="Pfam" id="PF02882">
    <property type="entry name" value="THF_DHG_CYH_C"/>
    <property type="match status" value="1"/>
</dbReference>
<dbReference type="PRINTS" id="PR00085">
    <property type="entry name" value="THFDHDRGNASE"/>
</dbReference>
<dbReference type="SUPFAM" id="SSF53223">
    <property type="entry name" value="Aminoacid dehydrogenase-like, N-terminal domain"/>
    <property type="match status" value="1"/>
</dbReference>
<dbReference type="SUPFAM" id="SSF51735">
    <property type="entry name" value="NAD(P)-binding Rossmann-fold domains"/>
    <property type="match status" value="1"/>
</dbReference>
<dbReference type="PROSITE" id="PS00767">
    <property type="entry name" value="THF_DHG_CYH_2"/>
    <property type="match status" value="1"/>
</dbReference>
<accession>Q2SRE7</accession>
<comment type="function">
    <text evidence="1">Catalyzes the oxidation of 5,10-methylenetetrahydrofolate to 5,10-methenyltetrahydrofolate and then the hydrolysis of 5,10-methenyltetrahydrofolate to 10-formyltetrahydrofolate.</text>
</comment>
<comment type="catalytic activity">
    <reaction evidence="1">
        <text>(6R)-5,10-methylene-5,6,7,8-tetrahydrofolate + NADP(+) = (6R)-5,10-methenyltetrahydrofolate + NADPH</text>
        <dbReference type="Rhea" id="RHEA:22812"/>
        <dbReference type="ChEBI" id="CHEBI:15636"/>
        <dbReference type="ChEBI" id="CHEBI:57455"/>
        <dbReference type="ChEBI" id="CHEBI:57783"/>
        <dbReference type="ChEBI" id="CHEBI:58349"/>
        <dbReference type="EC" id="1.5.1.5"/>
    </reaction>
</comment>
<comment type="catalytic activity">
    <reaction evidence="1">
        <text>(6R)-5,10-methenyltetrahydrofolate + H2O = (6R)-10-formyltetrahydrofolate + H(+)</text>
        <dbReference type="Rhea" id="RHEA:23700"/>
        <dbReference type="ChEBI" id="CHEBI:15377"/>
        <dbReference type="ChEBI" id="CHEBI:15378"/>
        <dbReference type="ChEBI" id="CHEBI:57455"/>
        <dbReference type="ChEBI" id="CHEBI:195366"/>
        <dbReference type="EC" id="3.5.4.9"/>
    </reaction>
</comment>
<comment type="pathway">
    <text evidence="1">One-carbon metabolism; tetrahydrofolate interconversion.</text>
</comment>
<comment type="subunit">
    <text evidence="1">Homodimer.</text>
</comment>
<comment type="similarity">
    <text evidence="1">Belongs to the tetrahydrofolate dehydrogenase/cyclohydrolase family.</text>
</comment>
<evidence type="ECO:0000255" key="1">
    <source>
        <dbReference type="HAMAP-Rule" id="MF_01576"/>
    </source>
</evidence>
<proteinExistence type="inferred from homology"/>
<feature type="chain" id="PRO_0000268405" description="Bifunctional protein FolD">
    <location>
        <begin position="1"/>
        <end position="284"/>
    </location>
</feature>
<feature type="binding site" evidence="1">
    <location>
        <begin position="164"/>
        <end position="166"/>
    </location>
    <ligand>
        <name>NADP(+)</name>
        <dbReference type="ChEBI" id="CHEBI:58349"/>
    </ligand>
</feature>
<feature type="binding site" evidence="1">
    <location>
        <position position="230"/>
    </location>
    <ligand>
        <name>NADP(+)</name>
        <dbReference type="ChEBI" id="CHEBI:58349"/>
    </ligand>
</feature>